<accession>Q3SID4</accession>
<keyword id="KW-0963">Cytoplasm</keyword>
<keyword id="KW-0274">FAD</keyword>
<keyword id="KW-0285">Flavoprotein</keyword>
<keyword id="KW-0489">Methyltransferase</keyword>
<keyword id="KW-0511">Multifunctional enzyme</keyword>
<keyword id="KW-0560">Oxidoreductase</keyword>
<keyword id="KW-1185">Reference proteome</keyword>
<keyword id="KW-0949">S-adenosyl-L-methionine</keyword>
<keyword id="KW-0808">Transferase</keyword>
<keyword id="KW-0819">tRNA processing</keyword>
<comment type="function">
    <text evidence="1">Catalyzes the last two steps in the biosynthesis of 5-methylaminomethyl-2-thiouridine (mnm(5)s(2)U) at the wobble position (U34) in tRNA. Catalyzes the FAD-dependent demodification of cmnm(5)s(2)U34 to nm(5)s(2)U34, followed by the transfer of a methyl group from S-adenosyl-L-methionine to nm(5)s(2)U34, to form mnm(5)s(2)U34.</text>
</comment>
<comment type="catalytic activity">
    <reaction evidence="1">
        <text>5-aminomethyl-2-thiouridine(34) in tRNA + S-adenosyl-L-methionine = 5-methylaminomethyl-2-thiouridine(34) in tRNA + S-adenosyl-L-homocysteine + H(+)</text>
        <dbReference type="Rhea" id="RHEA:19569"/>
        <dbReference type="Rhea" id="RHEA-COMP:10195"/>
        <dbReference type="Rhea" id="RHEA-COMP:10197"/>
        <dbReference type="ChEBI" id="CHEBI:15378"/>
        <dbReference type="ChEBI" id="CHEBI:57856"/>
        <dbReference type="ChEBI" id="CHEBI:59789"/>
        <dbReference type="ChEBI" id="CHEBI:74454"/>
        <dbReference type="ChEBI" id="CHEBI:74455"/>
        <dbReference type="EC" id="2.1.1.61"/>
    </reaction>
</comment>
<comment type="cofactor">
    <cofactor evidence="1">
        <name>FAD</name>
        <dbReference type="ChEBI" id="CHEBI:57692"/>
    </cofactor>
</comment>
<comment type="subcellular location">
    <subcellularLocation>
        <location evidence="1">Cytoplasm</location>
    </subcellularLocation>
</comment>
<comment type="similarity">
    <text evidence="1">In the N-terminal section; belongs to the methyltransferase superfamily. tRNA (mnm(5)s(2)U34)-methyltransferase family.</text>
</comment>
<comment type="similarity">
    <text evidence="1">In the C-terminal section; belongs to the DAO family.</text>
</comment>
<comment type="sequence caution" evidence="2">
    <conflict type="erroneous initiation">
        <sequence resource="EMBL-CDS" id="AAZ97594"/>
    </conflict>
</comment>
<organism>
    <name type="scientific">Thiobacillus denitrificans (strain ATCC 25259 / T1)</name>
    <dbReference type="NCBI Taxonomy" id="292415"/>
    <lineage>
        <taxon>Bacteria</taxon>
        <taxon>Pseudomonadati</taxon>
        <taxon>Pseudomonadota</taxon>
        <taxon>Betaproteobacteria</taxon>
        <taxon>Nitrosomonadales</taxon>
        <taxon>Thiobacillaceae</taxon>
        <taxon>Thiobacillus</taxon>
    </lineage>
</organism>
<reference key="1">
    <citation type="journal article" date="2006" name="J. Bacteriol.">
        <title>The genome sequence of the obligately chemolithoautotrophic, facultatively anaerobic bacterium Thiobacillus denitrificans.</title>
        <authorList>
            <person name="Beller H.R."/>
            <person name="Chain P.S."/>
            <person name="Letain T.E."/>
            <person name="Chakicherla A."/>
            <person name="Larimer F.W."/>
            <person name="Richardson P.M."/>
            <person name="Coleman M.A."/>
            <person name="Wood A.P."/>
            <person name="Kelly D.P."/>
        </authorList>
    </citation>
    <scope>NUCLEOTIDE SEQUENCE [LARGE SCALE GENOMIC DNA]</scope>
    <source>
        <strain>ATCC 25259 / T1</strain>
    </source>
</reference>
<name>MNMC_THIDA</name>
<gene>
    <name evidence="1" type="primary">mnmC</name>
    <name type="ordered locus">Tbd_1641</name>
</gene>
<proteinExistence type="inferred from homology"/>
<sequence length="616" mass="65572">MLRTIVPARLEFRDGVPYSAAYGDVYHSADGGPGQARHVFLAGCGLPAAWAGRDSFVVLETGFGTGLNFLATWAAWRDDPARPSRLHFLSVEKHPFQAADLARIHAQWPEFAELSEVLRGNWPMLLPGFHRVALDGGRVQLTLMLGEAAECLHEVEARVDAFYLDGFAPDRNTDLWQPQLFETLAWLANPGATAATYTVAAPVLQGLTQAGFACEKRRGYGRKRHCMSARFAGRSRAEVSAAPRHVAVIGGGVAGAAAARALVDRGVSVTLLERATAPAEGASGNPVAVFRPLISRDDNRATRLTRAAFLHDLRAWAALGECVQWARCGVLHLARDAATAAKQQQALAEIALPADYARWVDLGEARELAHWSVAAPGTFYSAAGWVVPGSLCRAWLDHPGIGLQTNRAVGRLQAVSNGWQILDREGHALAEADAVVLANARDASRLALGQAWPLHTVRGQVTQLPAGSLPEIARVIAREGYVAPGAAGPLVGATYEHPEGYKENDDDTAPRAASDVANLARLEAILPGATQRFVSNEVSGRASLRATLPDRLPLVGAVDGQPGLYVAAGYASRGVVWAGLLGEALADLITGQPLPLEAELMRGIAPARFAGNRKTA</sequence>
<dbReference type="EC" id="2.1.1.61" evidence="1"/>
<dbReference type="EC" id="1.5.-.-" evidence="1"/>
<dbReference type="EMBL" id="CP000116">
    <property type="protein sequence ID" value="AAZ97594.1"/>
    <property type="status" value="ALT_INIT"/>
    <property type="molecule type" value="Genomic_DNA"/>
</dbReference>
<dbReference type="RefSeq" id="WP_011312153.1">
    <property type="nucleotide sequence ID" value="NC_007404.1"/>
</dbReference>
<dbReference type="SMR" id="Q3SID4"/>
<dbReference type="STRING" id="292415.Tbd_1641"/>
<dbReference type="KEGG" id="tbd:Tbd_1641"/>
<dbReference type="eggNOG" id="COG0665">
    <property type="taxonomic scope" value="Bacteria"/>
</dbReference>
<dbReference type="eggNOG" id="COG4121">
    <property type="taxonomic scope" value="Bacteria"/>
</dbReference>
<dbReference type="HOGENOM" id="CLU_022427_1_0_4"/>
<dbReference type="OrthoDB" id="9786494at2"/>
<dbReference type="Proteomes" id="UP000008291">
    <property type="component" value="Chromosome"/>
</dbReference>
<dbReference type="GO" id="GO:0005737">
    <property type="term" value="C:cytoplasm"/>
    <property type="evidence" value="ECO:0007669"/>
    <property type="project" value="UniProtKB-SubCell"/>
</dbReference>
<dbReference type="GO" id="GO:0050660">
    <property type="term" value="F:flavin adenine dinucleotide binding"/>
    <property type="evidence" value="ECO:0007669"/>
    <property type="project" value="UniProtKB-UniRule"/>
</dbReference>
<dbReference type="GO" id="GO:0016645">
    <property type="term" value="F:oxidoreductase activity, acting on the CH-NH group of donors"/>
    <property type="evidence" value="ECO:0007669"/>
    <property type="project" value="InterPro"/>
</dbReference>
<dbReference type="GO" id="GO:0004808">
    <property type="term" value="F:tRNA (5-methylaminomethyl-2-thiouridylate)(34)-methyltransferase activity"/>
    <property type="evidence" value="ECO:0007669"/>
    <property type="project" value="UniProtKB-EC"/>
</dbReference>
<dbReference type="GO" id="GO:0032259">
    <property type="term" value="P:methylation"/>
    <property type="evidence" value="ECO:0007669"/>
    <property type="project" value="UniProtKB-KW"/>
</dbReference>
<dbReference type="GO" id="GO:0002097">
    <property type="term" value="P:tRNA wobble base modification"/>
    <property type="evidence" value="ECO:0007669"/>
    <property type="project" value="UniProtKB-UniRule"/>
</dbReference>
<dbReference type="Gene3D" id="3.30.9.10">
    <property type="entry name" value="D-Amino Acid Oxidase, subunit A, domain 2"/>
    <property type="match status" value="1"/>
</dbReference>
<dbReference type="Gene3D" id="3.50.50.60">
    <property type="entry name" value="FAD/NAD(P)-binding domain"/>
    <property type="match status" value="1"/>
</dbReference>
<dbReference type="Gene3D" id="3.40.50.150">
    <property type="entry name" value="Vaccinia Virus protein VP39"/>
    <property type="match status" value="1"/>
</dbReference>
<dbReference type="HAMAP" id="MF_01102">
    <property type="entry name" value="MnmC"/>
    <property type="match status" value="1"/>
</dbReference>
<dbReference type="InterPro" id="IPR006076">
    <property type="entry name" value="FAD-dep_OxRdtase"/>
</dbReference>
<dbReference type="InterPro" id="IPR036188">
    <property type="entry name" value="FAD/NAD-bd_sf"/>
</dbReference>
<dbReference type="InterPro" id="IPR008471">
    <property type="entry name" value="MnmC-like_methylTransf"/>
</dbReference>
<dbReference type="InterPro" id="IPR029063">
    <property type="entry name" value="SAM-dependent_MTases_sf"/>
</dbReference>
<dbReference type="InterPro" id="IPR023032">
    <property type="entry name" value="tRNA_MAMT_biosynth_bifunc_MnmC"/>
</dbReference>
<dbReference type="InterPro" id="IPR047785">
    <property type="entry name" value="tRNA_MNMC2"/>
</dbReference>
<dbReference type="InterPro" id="IPR017610">
    <property type="entry name" value="tRNA_S-uridine_synth_MnmC_C"/>
</dbReference>
<dbReference type="NCBIfam" id="TIGR03197">
    <property type="entry name" value="MnmC_Cterm"/>
    <property type="match status" value="1"/>
</dbReference>
<dbReference type="NCBIfam" id="NF002481">
    <property type="entry name" value="PRK01747.1-2"/>
    <property type="match status" value="1"/>
</dbReference>
<dbReference type="NCBIfam" id="NF002483">
    <property type="entry name" value="PRK01747.1-4"/>
    <property type="match status" value="1"/>
</dbReference>
<dbReference type="NCBIfam" id="NF033855">
    <property type="entry name" value="tRNA_MNMC2"/>
    <property type="match status" value="1"/>
</dbReference>
<dbReference type="PANTHER" id="PTHR13847">
    <property type="entry name" value="SARCOSINE DEHYDROGENASE-RELATED"/>
    <property type="match status" value="1"/>
</dbReference>
<dbReference type="PANTHER" id="PTHR13847:SF283">
    <property type="entry name" value="TRNA 5-METHYLAMINOMETHYL-2-THIOURIDINE BIOSYNTHESIS BIFUNCTIONAL PROTEIN MNMC"/>
    <property type="match status" value="1"/>
</dbReference>
<dbReference type="Pfam" id="PF01266">
    <property type="entry name" value="DAO"/>
    <property type="match status" value="1"/>
</dbReference>
<dbReference type="Pfam" id="PF05430">
    <property type="entry name" value="Methyltransf_30"/>
    <property type="match status" value="1"/>
</dbReference>
<dbReference type="SUPFAM" id="SSF51905">
    <property type="entry name" value="FAD/NAD(P)-binding domain"/>
    <property type="match status" value="1"/>
</dbReference>
<evidence type="ECO:0000255" key="1">
    <source>
        <dbReference type="HAMAP-Rule" id="MF_01102"/>
    </source>
</evidence>
<evidence type="ECO:0000305" key="2"/>
<protein>
    <recommendedName>
        <fullName evidence="1">tRNA 5-methylaminomethyl-2-thiouridine biosynthesis bifunctional protein MnmC</fullName>
        <shortName evidence="1">tRNA mnm(5)s(2)U biosynthesis bifunctional protein</shortName>
    </recommendedName>
    <domain>
        <recommendedName>
            <fullName evidence="1">tRNA (mnm(5)s(2)U34)-methyltransferase</fullName>
            <ecNumber evidence="1">2.1.1.61</ecNumber>
        </recommendedName>
    </domain>
    <domain>
        <recommendedName>
            <fullName evidence="1">FAD-dependent cmnm(5)s(2)U34 oxidoreductase</fullName>
            <ecNumber evidence="1">1.5.-.-</ecNumber>
        </recommendedName>
    </domain>
</protein>
<feature type="chain" id="PRO_0000348043" description="tRNA 5-methylaminomethyl-2-thiouridine biosynthesis bifunctional protein MnmC">
    <location>
        <begin position="1"/>
        <end position="616"/>
    </location>
</feature>
<feature type="region of interest" description="tRNA (mnm(5)s(2)U34)-methyltransferase">
    <location>
        <begin position="1"/>
        <end position="232"/>
    </location>
</feature>
<feature type="region of interest" description="FAD-dependent cmnm(5)s(2)U34 oxidoreductase">
    <location>
        <begin position="249"/>
        <end position="616"/>
    </location>
</feature>